<sequence length="261" mass="29718">MSHQAHAYHMVDPSPWPLTGAGAALLMTSGLAMWFHKNSCILMTLGLILMLLTMYQWWRDIVREGTFLGHHTSPVQQGLRYGMILFIISEVCFFAGFFWAFYHASLAPTPELGLTWPPTGINPLNPFEVPLLNTAVLLASGVSVTWAHHSITEKNRTETTQALTLTVLLGLYFTALQIMEYYETPFTMADGVYGSTFFVATGFHGLHVIIGSLFLLTCLLRHLQYHFTSKHHFGFEAAAWYWHFVDVVWLFLYISIYWWGS</sequence>
<reference key="1">
    <citation type="journal article" date="1995" name="Genetics">
        <title>Complete sequence of a sea lamprey (Petromyzon marinus) mitochondrial genome: early establishment of the vertebrate genome organization.</title>
        <authorList>
            <person name="Lee W.J."/>
            <person name="Kocher T.D."/>
        </authorList>
    </citation>
    <scope>NUCLEOTIDE SEQUENCE [GENOMIC DNA]</scope>
</reference>
<accession>Q35539</accession>
<feature type="chain" id="PRO_0000183829" description="Cytochrome c oxidase subunit 3">
    <location>
        <begin position="1"/>
        <end position="261"/>
    </location>
</feature>
<feature type="topological domain" description="Mitochondrial matrix" evidence="1">
    <location>
        <begin position="1"/>
        <end position="15"/>
    </location>
</feature>
<feature type="transmembrane region" description="Helical; Name=I" evidence="1">
    <location>
        <begin position="16"/>
        <end position="34"/>
    </location>
</feature>
<feature type="topological domain" description="Mitochondrial intermembrane" evidence="1">
    <location>
        <begin position="35"/>
        <end position="40"/>
    </location>
</feature>
<feature type="transmembrane region" description="Helical; Name=II" evidence="1">
    <location>
        <begin position="41"/>
        <end position="66"/>
    </location>
</feature>
<feature type="topological domain" description="Mitochondrial matrix" evidence="1">
    <location>
        <begin position="67"/>
        <end position="72"/>
    </location>
</feature>
<feature type="transmembrane region" description="Helical; Name=III" evidence="1">
    <location>
        <begin position="73"/>
        <end position="105"/>
    </location>
</feature>
<feature type="topological domain" description="Mitochondrial intermembrane" evidence="1">
    <location>
        <begin position="106"/>
        <end position="128"/>
    </location>
</feature>
<feature type="transmembrane region" description="Helical; Name=IV" evidence="1">
    <location>
        <begin position="129"/>
        <end position="152"/>
    </location>
</feature>
<feature type="topological domain" description="Mitochondrial matrix" evidence="1">
    <location>
        <begin position="153"/>
        <end position="155"/>
    </location>
</feature>
<feature type="transmembrane region" description="Helical; Name=V" evidence="1">
    <location>
        <begin position="156"/>
        <end position="183"/>
    </location>
</feature>
<feature type="topological domain" description="Mitochondrial intermembrane" evidence="1">
    <location>
        <begin position="184"/>
        <end position="190"/>
    </location>
</feature>
<feature type="transmembrane region" description="Helical; Name=VI" evidence="1">
    <location>
        <begin position="191"/>
        <end position="223"/>
    </location>
</feature>
<feature type="topological domain" description="Mitochondrial matrix" evidence="1">
    <location>
        <begin position="224"/>
        <end position="232"/>
    </location>
</feature>
<feature type="transmembrane region" description="Helical; Name=VII" evidence="1">
    <location>
        <begin position="233"/>
        <end position="256"/>
    </location>
</feature>
<feature type="topological domain" description="Mitochondrial intermembrane" evidence="1">
    <location>
        <begin position="257"/>
        <end position="261"/>
    </location>
</feature>
<organism>
    <name type="scientific">Petromyzon marinus</name>
    <name type="common">Sea lamprey</name>
    <dbReference type="NCBI Taxonomy" id="7757"/>
    <lineage>
        <taxon>Eukaryota</taxon>
        <taxon>Metazoa</taxon>
        <taxon>Chordata</taxon>
        <taxon>Craniata</taxon>
        <taxon>Vertebrata</taxon>
        <taxon>Cyclostomata</taxon>
        <taxon>Hyperoartia</taxon>
        <taxon>Petromyzontiformes</taxon>
        <taxon>Petromyzontidae</taxon>
        <taxon>Petromyzon</taxon>
    </lineage>
</organism>
<dbReference type="EC" id="7.1.1.9"/>
<dbReference type="EMBL" id="U11880">
    <property type="protein sequence ID" value="AAB08744.1"/>
    <property type="molecule type" value="Genomic_DNA"/>
</dbReference>
<dbReference type="PIR" id="S55010">
    <property type="entry name" value="S55010"/>
</dbReference>
<dbReference type="SMR" id="Q35539"/>
<dbReference type="STRING" id="7757.ENSPMAP00000011437"/>
<dbReference type="Ensembl" id="ENSPMAT00000014129.1">
    <property type="protein sequence ID" value="ENSPMAP00000011437.1"/>
    <property type="gene ID" value="ENSPMAG00000013102.1"/>
</dbReference>
<dbReference type="KEGG" id="pmrn:807805"/>
<dbReference type="CTD" id="4514"/>
<dbReference type="GeneTree" id="ENSGT00390000013064"/>
<dbReference type="HOGENOM" id="CLU_044071_0_0_1"/>
<dbReference type="OMA" id="SIYWWGS"/>
<dbReference type="OrthoDB" id="10050457at2759"/>
<dbReference type="Proteomes" id="UP001318040">
    <property type="component" value="Mitochondrion MT"/>
</dbReference>
<dbReference type="GO" id="GO:0005743">
    <property type="term" value="C:mitochondrial inner membrane"/>
    <property type="evidence" value="ECO:0007669"/>
    <property type="project" value="UniProtKB-SubCell"/>
</dbReference>
<dbReference type="GO" id="GO:0045277">
    <property type="term" value="C:respiratory chain complex IV"/>
    <property type="evidence" value="ECO:0000250"/>
    <property type="project" value="UniProtKB"/>
</dbReference>
<dbReference type="GO" id="GO:0004129">
    <property type="term" value="F:cytochrome-c oxidase activity"/>
    <property type="evidence" value="ECO:0007669"/>
    <property type="project" value="UniProtKB-EC"/>
</dbReference>
<dbReference type="GO" id="GO:0006123">
    <property type="term" value="P:mitochondrial electron transport, cytochrome c to oxygen"/>
    <property type="evidence" value="ECO:0007669"/>
    <property type="project" value="TreeGrafter"/>
</dbReference>
<dbReference type="CDD" id="cd01665">
    <property type="entry name" value="Cyt_c_Oxidase_III"/>
    <property type="match status" value="1"/>
</dbReference>
<dbReference type="FunFam" id="1.10.287.70:FF:000048">
    <property type="entry name" value="Cytochrome c oxidase subunit 3"/>
    <property type="match status" value="1"/>
</dbReference>
<dbReference type="FunFam" id="1.20.120.80:FF:000002">
    <property type="entry name" value="Cytochrome c oxidase subunit 3"/>
    <property type="match status" value="1"/>
</dbReference>
<dbReference type="Gene3D" id="1.10.287.70">
    <property type="match status" value="1"/>
</dbReference>
<dbReference type="Gene3D" id="1.20.120.80">
    <property type="entry name" value="Cytochrome c oxidase, subunit III, four-helix bundle"/>
    <property type="match status" value="1"/>
</dbReference>
<dbReference type="InterPro" id="IPR024791">
    <property type="entry name" value="Cyt_c/ubiquinol_Oxase_su3"/>
</dbReference>
<dbReference type="InterPro" id="IPR033945">
    <property type="entry name" value="Cyt_c_oxase_su3_dom"/>
</dbReference>
<dbReference type="InterPro" id="IPR000298">
    <property type="entry name" value="Cyt_c_oxidase-like_su3"/>
</dbReference>
<dbReference type="InterPro" id="IPR035973">
    <property type="entry name" value="Cyt_c_oxidase_su3-like_sf"/>
</dbReference>
<dbReference type="InterPro" id="IPR013833">
    <property type="entry name" value="Cyt_c_oxidase_su3_a-hlx"/>
</dbReference>
<dbReference type="PANTHER" id="PTHR11403:SF7">
    <property type="entry name" value="CYTOCHROME C OXIDASE SUBUNIT 3"/>
    <property type="match status" value="1"/>
</dbReference>
<dbReference type="PANTHER" id="PTHR11403">
    <property type="entry name" value="CYTOCHROME C OXIDASE SUBUNIT III"/>
    <property type="match status" value="1"/>
</dbReference>
<dbReference type="Pfam" id="PF00510">
    <property type="entry name" value="COX3"/>
    <property type="match status" value="1"/>
</dbReference>
<dbReference type="SUPFAM" id="SSF81452">
    <property type="entry name" value="Cytochrome c oxidase subunit III-like"/>
    <property type="match status" value="1"/>
</dbReference>
<dbReference type="PROSITE" id="PS50253">
    <property type="entry name" value="COX3"/>
    <property type="match status" value="1"/>
</dbReference>
<comment type="function">
    <text evidence="2">Component of the cytochrome c oxidase, the last enzyme in the mitochondrial electron transport chain which drives oxidative phosphorylation. The respiratory chain contains 3 multisubunit complexes succinate dehydrogenase (complex II, CII), ubiquinol-cytochrome c oxidoreductase (cytochrome b-c1 complex, complex III, CIII) and cytochrome c oxidase (complex IV, CIV), that cooperate to transfer electrons derived from NADH and succinate to molecular oxygen, creating an electrochemical gradient over the inner membrane that drives transmembrane transport and the ATP synthase. Cytochrome c oxidase is the component of the respiratory chain that catalyzes the reduction of oxygen to water. Electrons originating from reduced cytochrome c in the intermembrane space (IMS) are transferred via the dinuclear copper A center (CU(A)) of subunit 2 and heme A of subunit 1 to the active site in subunit 1, a binuclear center (BNC) formed by heme A3 and copper B (CU(B)). The BNC reduces molecular oxygen to 2 water molecules using 4 electrons from cytochrome c in the IMS and 4 protons from the mitochondrial matrix.</text>
</comment>
<comment type="catalytic activity">
    <reaction evidence="2">
        <text>4 Fe(II)-[cytochrome c] + O2 + 8 H(+)(in) = 4 Fe(III)-[cytochrome c] + 2 H2O + 4 H(+)(out)</text>
        <dbReference type="Rhea" id="RHEA:11436"/>
        <dbReference type="Rhea" id="RHEA-COMP:10350"/>
        <dbReference type="Rhea" id="RHEA-COMP:14399"/>
        <dbReference type="ChEBI" id="CHEBI:15377"/>
        <dbReference type="ChEBI" id="CHEBI:15378"/>
        <dbReference type="ChEBI" id="CHEBI:15379"/>
        <dbReference type="ChEBI" id="CHEBI:29033"/>
        <dbReference type="ChEBI" id="CHEBI:29034"/>
        <dbReference type="EC" id="7.1.1.9"/>
    </reaction>
    <physiologicalReaction direction="left-to-right" evidence="2">
        <dbReference type="Rhea" id="RHEA:11437"/>
    </physiologicalReaction>
</comment>
<comment type="subunit">
    <text evidence="1">Component of the cytochrome c oxidase (complex IV, CIV), a multisubunit enzyme composed of 14 subunits. The complex is composed of a catalytic core of 3 subunits MT-CO1, MT-CO2 and MT-CO3, encoded in the mitochondrial DNA, and 11 supernumerary subunits COX4I, COX5A, COX5B, COX6A, COX6B, COX6C, COX7A, COX7B, COX7C, COX8 and NDUFA4, which are encoded in the nuclear genome. The complex exists as a monomer or a dimer and forms supercomplexes (SCs) in the inner mitochondrial membrane with NADH-ubiquinone oxidoreductase (complex I, CI) and ubiquinol-cytochrome c oxidoreductase (cytochrome b-c1 complex, complex III, CIII), resulting in different assemblies (supercomplex SCI(1)III(2)IV(1) and megacomplex MCI(2)III(2)IV(2)).</text>
</comment>
<comment type="subcellular location">
    <subcellularLocation>
        <location evidence="1">Mitochondrion inner membrane</location>
        <topology evidence="1">Multi-pass membrane protein</topology>
    </subcellularLocation>
</comment>
<comment type="similarity">
    <text evidence="3">Belongs to the cytochrome c oxidase subunit 3 family.</text>
</comment>
<name>COX3_PETMA</name>
<evidence type="ECO:0000250" key="1">
    <source>
        <dbReference type="UniProtKB" id="P00415"/>
    </source>
</evidence>
<evidence type="ECO:0000250" key="2">
    <source>
        <dbReference type="UniProtKB" id="P00420"/>
    </source>
</evidence>
<evidence type="ECO:0000305" key="3"/>
<keyword id="KW-0472">Membrane</keyword>
<keyword id="KW-0496">Mitochondrion</keyword>
<keyword id="KW-0999">Mitochondrion inner membrane</keyword>
<keyword id="KW-1278">Translocase</keyword>
<keyword id="KW-0812">Transmembrane</keyword>
<keyword id="KW-1133">Transmembrane helix</keyword>
<geneLocation type="mitochondrion"/>
<gene>
    <name type="primary">MT-CO3</name>
    <name type="synonym">COIII</name>
    <name type="synonym">COXIII</name>
    <name type="synonym">MTCO3</name>
</gene>
<protein>
    <recommendedName>
        <fullName>Cytochrome c oxidase subunit 3</fullName>
        <ecNumber>7.1.1.9</ecNumber>
    </recommendedName>
    <alternativeName>
        <fullName>Cytochrome c oxidase polypeptide III</fullName>
    </alternativeName>
</protein>
<proteinExistence type="inferred from homology"/>